<feature type="chain" id="PRO_1000205453" description="Large ribosomal subunit protein uL10">
    <location>
        <begin position="1"/>
        <end position="176"/>
    </location>
</feature>
<keyword id="KW-1185">Reference proteome</keyword>
<keyword id="KW-0687">Ribonucleoprotein</keyword>
<keyword id="KW-0689">Ribosomal protein</keyword>
<keyword id="KW-0694">RNA-binding</keyword>
<keyword id="KW-0699">rRNA-binding</keyword>
<evidence type="ECO:0000255" key="1">
    <source>
        <dbReference type="HAMAP-Rule" id="MF_00362"/>
    </source>
</evidence>
<evidence type="ECO:0000305" key="2"/>
<organism>
    <name type="scientific">Teredinibacter turnerae (strain ATCC 39867 / T7901)</name>
    <dbReference type="NCBI Taxonomy" id="377629"/>
    <lineage>
        <taxon>Bacteria</taxon>
        <taxon>Pseudomonadati</taxon>
        <taxon>Pseudomonadota</taxon>
        <taxon>Gammaproteobacteria</taxon>
        <taxon>Cellvibrionales</taxon>
        <taxon>Cellvibrionaceae</taxon>
        <taxon>Teredinibacter</taxon>
    </lineage>
</organism>
<comment type="function">
    <text evidence="1">Forms part of the ribosomal stalk, playing a central role in the interaction of the ribosome with GTP-bound translation factors.</text>
</comment>
<comment type="subunit">
    <text evidence="1">Part of the ribosomal stalk of the 50S ribosomal subunit. The N-terminus interacts with L11 and the large rRNA to form the base of the stalk. The C-terminus forms an elongated spine to which L12 dimers bind in a sequential fashion forming a multimeric L10(L12)X complex.</text>
</comment>
<comment type="similarity">
    <text evidence="1">Belongs to the universal ribosomal protein uL10 family.</text>
</comment>
<dbReference type="EMBL" id="CP001614">
    <property type="protein sequence ID" value="ACR13786.1"/>
    <property type="molecule type" value="Genomic_DNA"/>
</dbReference>
<dbReference type="RefSeq" id="WP_015819901.1">
    <property type="nucleotide sequence ID" value="NC_012997.1"/>
</dbReference>
<dbReference type="STRING" id="377629.TERTU_0881"/>
<dbReference type="GeneID" id="58408658"/>
<dbReference type="GeneID" id="93857767"/>
<dbReference type="KEGG" id="ttu:TERTU_0881"/>
<dbReference type="eggNOG" id="COG0244">
    <property type="taxonomic scope" value="Bacteria"/>
</dbReference>
<dbReference type="HOGENOM" id="CLU_092227_0_2_6"/>
<dbReference type="OrthoDB" id="9808307at2"/>
<dbReference type="Proteomes" id="UP000009080">
    <property type="component" value="Chromosome"/>
</dbReference>
<dbReference type="GO" id="GO:0015934">
    <property type="term" value="C:large ribosomal subunit"/>
    <property type="evidence" value="ECO:0007669"/>
    <property type="project" value="InterPro"/>
</dbReference>
<dbReference type="GO" id="GO:0070180">
    <property type="term" value="F:large ribosomal subunit rRNA binding"/>
    <property type="evidence" value="ECO:0007669"/>
    <property type="project" value="UniProtKB-UniRule"/>
</dbReference>
<dbReference type="GO" id="GO:0003735">
    <property type="term" value="F:structural constituent of ribosome"/>
    <property type="evidence" value="ECO:0007669"/>
    <property type="project" value="InterPro"/>
</dbReference>
<dbReference type="GO" id="GO:0006412">
    <property type="term" value="P:translation"/>
    <property type="evidence" value="ECO:0007669"/>
    <property type="project" value="UniProtKB-UniRule"/>
</dbReference>
<dbReference type="CDD" id="cd05797">
    <property type="entry name" value="Ribosomal_L10"/>
    <property type="match status" value="1"/>
</dbReference>
<dbReference type="FunFam" id="3.30.70.1730:FF:000001">
    <property type="entry name" value="50S ribosomal protein L10"/>
    <property type="match status" value="1"/>
</dbReference>
<dbReference type="Gene3D" id="3.30.70.1730">
    <property type="match status" value="1"/>
</dbReference>
<dbReference type="Gene3D" id="6.10.250.290">
    <property type="match status" value="1"/>
</dbReference>
<dbReference type="HAMAP" id="MF_00362">
    <property type="entry name" value="Ribosomal_uL10"/>
    <property type="match status" value="1"/>
</dbReference>
<dbReference type="InterPro" id="IPR001790">
    <property type="entry name" value="Ribosomal_uL10"/>
</dbReference>
<dbReference type="InterPro" id="IPR043141">
    <property type="entry name" value="Ribosomal_uL10-like_sf"/>
</dbReference>
<dbReference type="InterPro" id="IPR022973">
    <property type="entry name" value="Ribosomal_uL10_bac"/>
</dbReference>
<dbReference type="InterPro" id="IPR047865">
    <property type="entry name" value="Ribosomal_uL10_bac_type"/>
</dbReference>
<dbReference type="InterPro" id="IPR002363">
    <property type="entry name" value="Ribosomal_uL10_CS_bac"/>
</dbReference>
<dbReference type="NCBIfam" id="NF000955">
    <property type="entry name" value="PRK00099.1-1"/>
    <property type="match status" value="1"/>
</dbReference>
<dbReference type="PANTHER" id="PTHR11560">
    <property type="entry name" value="39S RIBOSOMAL PROTEIN L10, MITOCHONDRIAL"/>
    <property type="match status" value="1"/>
</dbReference>
<dbReference type="Pfam" id="PF00466">
    <property type="entry name" value="Ribosomal_L10"/>
    <property type="match status" value="1"/>
</dbReference>
<dbReference type="SUPFAM" id="SSF160369">
    <property type="entry name" value="Ribosomal protein L10-like"/>
    <property type="match status" value="1"/>
</dbReference>
<dbReference type="PROSITE" id="PS01109">
    <property type="entry name" value="RIBOSOMAL_L10"/>
    <property type="match status" value="1"/>
</dbReference>
<accession>C5BQ37</accession>
<protein>
    <recommendedName>
        <fullName evidence="1">Large ribosomal subunit protein uL10</fullName>
    </recommendedName>
    <alternativeName>
        <fullName evidence="2">50S ribosomal protein L10</fullName>
    </alternativeName>
</protein>
<sequence length="176" mass="18774">MAIGLEDKKAIVADVNETASSALSLVIADARGVTVGKMDALRKLARENNVRLRVVRNTLAKRAVQGTDFECVNEALVGPSLLGFSMEDPGAAARIFKDFAKEQDKFEVKALSVGGKLLPASQIDALAKLPTREQALGMLASVMIAPVTKLVRTFNEVPSKVTRAVAAVRDQKKDAA</sequence>
<name>RL10_TERTT</name>
<reference key="1">
    <citation type="journal article" date="2009" name="PLoS ONE">
        <title>The complete genome of Teredinibacter turnerae T7901: an intracellular endosymbiont of marine wood-boring bivalves (shipworms).</title>
        <authorList>
            <person name="Yang J.C."/>
            <person name="Madupu R."/>
            <person name="Durkin A.S."/>
            <person name="Ekborg N.A."/>
            <person name="Pedamallu C.S."/>
            <person name="Hostetler J.B."/>
            <person name="Radune D."/>
            <person name="Toms B.S."/>
            <person name="Henrissat B."/>
            <person name="Coutinho P.M."/>
            <person name="Schwarz S."/>
            <person name="Field L."/>
            <person name="Trindade-Silva A.E."/>
            <person name="Soares C.A.G."/>
            <person name="Elshahawi S."/>
            <person name="Hanora A."/>
            <person name="Schmidt E.W."/>
            <person name="Haygood M.G."/>
            <person name="Posfai J."/>
            <person name="Benner J."/>
            <person name="Madinger C."/>
            <person name="Nove J."/>
            <person name="Anton B."/>
            <person name="Chaudhary K."/>
            <person name="Foster J."/>
            <person name="Holman A."/>
            <person name="Kumar S."/>
            <person name="Lessard P.A."/>
            <person name="Luyten Y.A."/>
            <person name="Slatko B."/>
            <person name="Wood N."/>
            <person name="Wu B."/>
            <person name="Teplitski M."/>
            <person name="Mougous J.D."/>
            <person name="Ward N."/>
            <person name="Eisen J.A."/>
            <person name="Badger J.H."/>
            <person name="Distel D.L."/>
        </authorList>
    </citation>
    <scope>NUCLEOTIDE SEQUENCE [LARGE SCALE GENOMIC DNA]</scope>
    <source>
        <strain>ATCC 39867 / T7901</strain>
    </source>
</reference>
<proteinExistence type="inferred from homology"/>
<gene>
    <name evidence="1" type="primary">rplJ</name>
    <name type="ordered locus">TERTU_0881</name>
</gene>